<proteinExistence type="evidence at protein level"/>
<feature type="chain" id="PRO_0000156388" description="UPF0173 metal-dependent hydrolase TM_1162">
    <location>
        <begin position="1"/>
        <end position="226"/>
    </location>
</feature>
<feature type="strand" evidence="3">
    <location>
        <begin position="1"/>
        <end position="5"/>
    </location>
</feature>
<feature type="strand" evidence="3">
    <location>
        <begin position="11"/>
        <end position="22"/>
    </location>
</feature>
<feature type="helix" evidence="3">
    <location>
        <begin position="35"/>
        <end position="37"/>
    </location>
</feature>
<feature type="strand" evidence="3">
    <location>
        <begin position="42"/>
        <end position="45"/>
    </location>
</feature>
<feature type="helix" evidence="3">
    <location>
        <begin position="51"/>
        <end position="54"/>
    </location>
</feature>
<feature type="helix" evidence="3">
    <location>
        <begin position="57"/>
        <end position="64"/>
    </location>
</feature>
<feature type="strand" evidence="3">
    <location>
        <begin position="67"/>
        <end position="71"/>
    </location>
</feature>
<feature type="helix" evidence="3">
    <location>
        <begin position="72"/>
        <end position="80"/>
    </location>
</feature>
<feature type="strand" evidence="3">
    <location>
        <begin position="84"/>
        <end position="88"/>
    </location>
</feature>
<feature type="strand" evidence="3">
    <location>
        <begin position="93"/>
        <end position="96"/>
    </location>
</feature>
<feature type="strand" evidence="3">
    <location>
        <begin position="99"/>
        <end position="105"/>
    </location>
</feature>
<feature type="strand" evidence="3">
    <location>
        <begin position="111"/>
        <end position="114"/>
    </location>
</feature>
<feature type="strand" evidence="3">
    <location>
        <begin position="117"/>
        <end position="120"/>
    </location>
</feature>
<feature type="strand" evidence="3">
    <location>
        <begin position="125"/>
        <end position="131"/>
    </location>
</feature>
<feature type="strand" evidence="3">
    <location>
        <begin position="134"/>
        <end position="138"/>
    </location>
</feature>
<feature type="helix" evidence="3">
    <location>
        <begin position="146"/>
        <end position="154"/>
    </location>
</feature>
<feature type="strand" evidence="3">
    <location>
        <begin position="157"/>
        <end position="162"/>
    </location>
</feature>
<feature type="strand" evidence="2">
    <location>
        <begin position="166"/>
        <end position="168"/>
    </location>
</feature>
<feature type="helix" evidence="3">
    <location>
        <begin position="171"/>
        <end position="181"/>
    </location>
</feature>
<feature type="strand" evidence="3">
    <location>
        <begin position="184"/>
        <end position="190"/>
    </location>
</feature>
<feature type="strand" evidence="3">
    <location>
        <begin position="192"/>
        <end position="194"/>
    </location>
</feature>
<feature type="helix" evidence="3">
    <location>
        <begin position="195"/>
        <end position="197"/>
    </location>
</feature>
<feature type="helix" evidence="3">
    <location>
        <begin position="201"/>
        <end position="210"/>
    </location>
</feature>
<feature type="strand" evidence="3">
    <location>
        <begin position="223"/>
        <end position="226"/>
    </location>
</feature>
<evidence type="ECO:0000255" key="1">
    <source>
        <dbReference type="HAMAP-Rule" id="MF_00457"/>
    </source>
</evidence>
<evidence type="ECO:0007829" key="2">
    <source>
        <dbReference type="PDB" id="3X2Z"/>
    </source>
</evidence>
<evidence type="ECO:0007829" key="3">
    <source>
        <dbReference type="PDB" id="3X30"/>
    </source>
</evidence>
<protein>
    <recommendedName>
        <fullName evidence="1">UPF0173 metal-dependent hydrolase TM_1162</fullName>
    </recommendedName>
</protein>
<keyword id="KW-0002">3D-structure</keyword>
<keyword id="KW-0378">Hydrolase</keyword>
<keyword id="KW-1185">Reference proteome</keyword>
<name>Y1162_THEMA</name>
<organism>
    <name type="scientific">Thermotoga maritima (strain ATCC 43589 / DSM 3109 / JCM 10099 / NBRC 100826 / MSB8)</name>
    <dbReference type="NCBI Taxonomy" id="243274"/>
    <lineage>
        <taxon>Bacteria</taxon>
        <taxon>Thermotogati</taxon>
        <taxon>Thermotogota</taxon>
        <taxon>Thermotogae</taxon>
        <taxon>Thermotogales</taxon>
        <taxon>Thermotogaceae</taxon>
        <taxon>Thermotoga</taxon>
    </lineage>
</organism>
<reference key="1">
    <citation type="journal article" date="1999" name="Nature">
        <title>Evidence for lateral gene transfer between Archaea and Bacteria from genome sequence of Thermotoga maritima.</title>
        <authorList>
            <person name="Nelson K.E."/>
            <person name="Clayton R.A."/>
            <person name="Gill S.R."/>
            <person name="Gwinn M.L."/>
            <person name="Dodson R.J."/>
            <person name="Haft D.H."/>
            <person name="Hickey E.K."/>
            <person name="Peterson J.D."/>
            <person name="Nelson W.C."/>
            <person name="Ketchum K.A."/>
            <person name="McDonald L.A."/>
            <person name="Utterback T.R."/>
            <person name="Malek J.A."/>
            <person name="Linher K.D."/>
            <person name="Garrett M.M."/>
            <person name="Stewart A.M."/>
            <person name="Cotton M.D."/>
            <person name="Pratt M.S."/>
            <person name="Phillips C.A."/>
            <person name="Richardson D.L."/>
            <person name="Heidelberg J.F."/>
            <person name="Sutton G.G."/>
            <person name="Fleischmann R.D."/>
            <person name="Eisen J.A."/>
            <person name="White O."/>
            <person name="Salzberg S.L."/>
            <person name="Smith H.O."/>
            <person name="Venter J.C."/>
            <person name="Fraser C.M."/>
        </authorList>
    </citation>
    <scope>NUCLEOTIDE SEQUENCE [LARGE SCALE GENOMIC DNA]</scope>
    <source>
        <strain>ATCC 43589 / DSM 3109 / JCM 10099 / NBRC 100826 / MSB8</strain>
    </source>
</reference>
<accession>Q9X0P5</accession>
<gene>
    <name type="ordered locus">TM_1162</name>
</gene>
<dbReference type="EMBL" id="AE000512">
    <property type="protein sequence ID" value="AAD36238.1"/>
    <property type="molecule type" value="Genomic_DNA"/>
</dbReference>
<dbReference type="PIR" id="H72287">
    <property type="entry name" value="H72287"/>
</dbReference>
<dbReference type="RefSeq" id="NP_228968.1">
    <property type="nucleotide sequence ID" value="NC_000853.1"/>
</dbReference>
<dbReference type="RefSeq" id="WP_004080208.1">
    <property type="nucleotide sequence ID" value="NZ_CP011107.1"/>
</dbReference>
<dbReference type="PDB" id="3X2X">
    <property type="method" value="X-ray"/>
    <property type="resolution" value="3.42 A"/>
    <property type="chains" value="A/B/C=1-226"/>
</dbReference>
<dbReference type="PDB" id="3X2Y">
    <property type="method" value="X-ray"/>
    <property type="resolution" value="2.67 A"/>
    <property type="chains" value="A/B/C=1-226"/>
</dbReference>
<dbReference type="PDB" id="3X2Z">
    <property type="method" value="X-ray"/>
    <property type="resolution" value="2.33 A"/>
    <property type="chains" value="A/B/C=1-226"/>
</dbReference>
<dbReference type="PDB" id="3X30">
    <property type="method" value="X-ray"/>
    <property type="resolution" value="1.92 A"/>
    <property type="chains" value="A=1-226"/>
</dbReference>
<dbReference type="PDBsum" id="3X2X"/>
<dbReference type="PDBsum" id="3X2Y"/>
<dbReference type="PDBsum" id="3X2Z"/>
<dbReference type="PDBsum" id="3X30"/>
<dbReference type="SMR" id="Q9X0P5"/>
<dbReference type="FunCoup" id="Q9X0P5">
    <property type="interactions" value="29"/>
</dbReference>
<dbReference type="STRING" id="243274.TM_1162"/>
<dbReference type="PaxDb" id="243274-THEMA_08525"/>
<dbReference type="EnsemblBacteria" id="AAD36238">
    <property type="protein sequence ID" value="AAD36238"/>
    <property type="gene ID" value="TM_1162"/>
</dbReference>
<dbReference type="KEGG" id="tma:TM1162"/>
<dbReference type="KEGG" id="tmi:THEMA_08525"/>
<dbReference type="KEGG" id="tmm:Tmari_1169"/>
<dbReference type="KEGG" id="tmw:THMA_1187"/>
<dbReference type="eggNOG" id="COG2220">
    <property type="taxonomic scope" value="Bacteria"/>
</dbReference>
<dbReference type="InParanoid" id="Q9X0P5"/>
<dbReference type="OrthoDB" id="36975at2"/>
<dbReference type="EvolutionaryTrace" id="Q9X0P5"/>
<dbReference type="Proteomes" id="UP000008183">
    <property type="component" value="Chromosome"/>
</dbReference>
<dbReference type="GO" id="GO:0016787">
    <property type="term" value="F:hydrolase activity"/>
    <property type="evidence" value="ECO:0000318"/>
    <property type="project" value="GO_Central"/>
</dbReference>
<dbReference type="Gene3D" id="3.60.15.10">
    <property type="entry name" value="Ribonuclease Z/Hydroxyacylglutathione hydrolase-like"/>
    <property type="match status" value="1"/>
</dbReference>
<dbReference type="HAMAP" id="MF_00457">
    <property type="entry name" value="UPF0173"/>
    <property type="match status" value="1"/>
</dbReference>
<dbReference type="InterPro" id="IPR001279">
    <property type="entry name" value="Metallo-B-lactamas"/>
</dbReference>
<dbReference type="InterPro" id="IPR036866">
    <property type="entry name" value="RibonucZ/Hydroxyglut_hydro"/>
</dbReference>
<dbReference type="InterPro" id="IPR022877">
    <property type="entry name" value="UPF0173"/>
</dbReference>
<dbReference type="InterPro" id="IPR050114">
    <property type="entry name" value="UPF0173_UPF0282_UlaG_hydrolase"/>
</dbReference>
<dbReference type="NCBIfam" id="NF001911">
    <property type="entry name" value="PRK00685.1"/>
    <property type="match status" value="1"/>
</dbReference>
<dbReference type="PANTHER" id="PTHR43546:SF3">
    <property type="entry name" value="UPF0173 METAL-DEPENDENT HYDROLASE MJ1163"/>
    <property type="match status" value="1"/>
</dbReference>
<dbReference type="PANTHER" id="PTHR43546">
    <property type="entry name" value="UPF0173 METAL-DEPENDENT HYDROLASE MJ1163-RELATED"/>
    <property type="match status" value="1"/>
</dbReference>
<dbReference type="Pfam" id="PF12706">
    <property type="entry name" value="Lactamase_B_2"/>
    <property type="match status" value="1"/>
</dbReference>
<dbReference type="SMART" id="SM00849">
    <property type="entry name" value="Lactamase_B"/>
    <property type="match status" value="1"/>
</dbReference>
<dbReference type="SUPFAM" id="SSF56281">
    <property type="entry name" value="Metallo-hydrolase/oxidoreductase"/>
    <property type="match status" value="1"/>
</dbReference>
<comment type="similarity">
    <text evidence="1">Belongs to the UPF0173 family.</text>
</comment>
<sequence>MKVTFLGHAVVLIEGKKNIIIDPFISGNPVCPVKLEGLPKIDYILVTHGHGDHLGDAVEIAKKNDATVISNYEICHYLGKKGVKTHAMHIGGSYLFDFGRVKMTPAVHGSGILDGDSMIYGGNPSGFLITIEGKKIYHAGDTGLTREMELLAEENVDVAFLPIGGNFVMDVEDAVRAAVMIKPKKVVPMHYGTWELIFADVELFKKKVEEKGVECVILEPGESLEL</sequence>